<evidence type="ECO:0000255" key="1">
    <source>
        <dbReference type="HAMAP-Rule" id="MF_00377"/>
    </source>
</evidence>
<dbReference type="EMBL" id="CP001634">
    <property type="protein sequence ID" value="ACR78730.1"/>
    <property type="molecule type" value="Genomic_DNA"/>
</dbReference>
<dbReference type="RefSeq" id="WP_012744518.1">
    <property type="nucleotide sequence ID" value="NC_012785.1"/>
</dbReference>
<dbReference type="SMR" id="C5CH91"/>
<dbReference type="STRING" id="521045.Kole_0001"/>
<dbReference type="KEGG" id="kol:Kole_0001"/>
<dbReference type="eggNOG" id="COG0593">
    <property type="taxonomic scope" value="Bacteria"/>
</dbReference>
<dbReference type="HOGENOM" id="CLU_026910_3_2_0"/>
<dbReference type="OrthoDB" id="9807019at2"/>
<dbReference type="Proteomes" id="UP000002382">
    <property type="component" value="Chromosome"/>
</dbReference>
<dbReference type="GO" id="GO:0005737">
    <property type="term" value="C:cytoplasm"/>
    <property type="evidence" value="ECO:0007669"/>
    <property type="project" value="UniProtKB-SubCell"/>
</dbReference>
<dbReference type="GO" id="GO:0005886">
    <property type="term" value="C:plasma membrane"/>
    <property type="evidence" value="ECO:0007669"/>
    <property type="project" value="TreeGrafter"/>
</dbReference>
<dbReference type="GO" id="GO:0005524">
    <property type="term" value="F:ATP binding"/>
    <property type="evidence" value="ECO:0007669"/>
    <property type="project" value="UniProtKB-UniRule"/>
</dbReference>
<dbReference type="GO" id="GO:0016887">
    <property type="term" value="F:ATP hydrolysis activity"/>
    <property type="evidence" value="ECO:0007669"/>
    <property type="project" value="InterPro"/>
</dbReference>
<dbReference type="GO" id="GO:0003688">
    <property type="term" value="F:DNA replication origin binding"/>
    <property type="evidence" value="ECO:0007669"/>
    <property type="project" value="UniProtKB-UniRule"/>
</dbReference>
<dbReference type="GO" id="GO:0008289">
    <property type="term" value="F:lipid binding"/>
    <property type="evidence" value="ECO:0007669"/>
    <property type="project" value="UniProtKB-KW"/>
</dbReference>
<dbReference type="GO" id="GO:0006270">
    <property type="term" value="P:DNA replication initiation"/>
    <property type="evidence" value="ECO:0007669"/>
    <property type="project" value="UniProtKB-UniRule"/>
</dbReference>
<dbReference type="GO" id="GO:0006275">
    <property type="term" value="P:regulation of DNA replication"/>
    <property type="evidence" value="ECO:0007669"/>
    <property type="project" value="UniProtKB-UniRule"/>
</dbReference>
<dbReference type="CDD" id="cd00009">
    <property type="entry name" value="AAA"/>
    <property type="match status" value="1"/>
</dbReference>
<dbReference type="CDD" id="cd06571">
    <property type="entry name" value="Bac_DnaA_C"/>
    <property type="match status" value="1"/>
</dbReference>
<dbReference type="FunFam" id="3.40.50.300:FF:000668">
    <property type="entry name" value="Chromosomal replication initiator protein DnaA"/>
    <property type="match status" value="1"/>
</dbReference>
<dbReference type="Gene3D" id="1.10.1750.10">
    <property type="match status" value="1"/>
</dbReference>
<dbReference type="Gene3D" id="1.10.8.60">
    <property type="match status" value="1"/>
</dbReference>
<dbReference type="Gene3D" id="3.30.300.180">
    <property type="match status" value="1"/>
</dbReference>
<dbReference type="Gene3D" id="3.40.50.300">
    <property type="entry name" value="P-loop containing nucleotide triphosphate hydrolases"/>
    <property type="match status" value="1"/>
</dbReference>
<dbReference type="HAMAP" id="MF_00377">
    <property type="entry name" value="DnaA_bact"/>
    <property type="match status" value="1"/>
</dbReference>
<dbReference type="InterPro" id="IPR003593">
    <property type="entry name" value="AAA+_ATPase"/>
</dbReference>
<dbReference type="InterPro" id="IPR001957">
    <property type="entry name" value="Chromosome_initiator_DnaA"/>
</dbReference>
<dbReference type="InterPro" id="IPR020591">
    <property type="entry name" value="Chromosome_initiator_DnaA-like"/>
</dbReference>
<dbReference type="InterPro" id="IPR013159">
    <property type="entry name" value="DnaA_C"/>
</dbReference>
<dbReference type="InterPro" id="IPR013317">
    <property type="entry name" value="DnaA_dom"/>
</dbReference>
<dbReference type="InterPro" id="IPR024633">
    <property type="entry name" value="DnaA_N_dom"/>
</dbReference>
<dbReference type="InterPro" id="IPR038454">
    <property type="entry name" value="DnaA_N_sf"/>
</dbReference>
<dbReference type="InterPro" id="IPR027417">
    <property type="entry name" value="P-loop_NTPase"/>
</dbReference>
<dbReference type="InterPro" id="IPR010921">
    <property type="entry name" value="Trp_repressor/repl_initiator"/>
</dbReference>
<dbReference type="NCBIfam" id="TIGR00362">
    <property type="entry name" value="DnaA"/>
    <property type="match status" value="1"/>
</dbReference>
<dbReference type="PANTHER" id="PTHR30050">
    <property type="entry name" value="CHROMOSOMAL REPLICATION INITIATOR PROTEIN DNAA"/>
    <property type="match status" value="1"/>
</dbReference>
<dbReference type="PANTHER" id="PTHR30050:SF2">
    <property type="entry name" value="CHROMOSOMAL REPLICATION INITIATOR PROTEIN DNAA"/>
    <property type="match status" value="1"/>
</dbReference>
<dbReference type="Pfam" id="PF00308">
    <property type="entry name" value="Bac_DnaA"/>
    <property type="match status" value="1"/>
</dbReference>
<dbReference type="Pfam" id="PF08299">
    <property type="entry name" value="Bac_DnaA_C"/>
    <property type="match status" value="1"/>
</dbReference>
<dbReference type="Pfam" id="PF11638">
    <property type="entry name" value="DnaA_N"/>
    <property type="match status" value="1"/>
</dbReference>
<dbReference type="PRINTS" id="PR00051">
    <property type="entry name" value="DNAA"/>
</dbReference>
<dbReference type="SMART" id="SM00382">
    <property type="entry name" value="AAA"/>
    <property type="match status" value="1"/>
</dbReference>
<dbReference type="SMART" id="SM00760">
    <property type="entry name" value="Bac_DnaA_C"/>
    <property type="match status" value="1"/>
</dbReference>
<dbReference type="SUPFAM" id="SSF52540">
    <property type="entry name" value="P-loop containing nucleoside triphosphate hydrolases"/>
    <property type="match status" value="1"/>
</dbReference>
<dbReference type="SUPFAM" id="SSF48295">
    <property type="entry name" value="TrpR-like"/>
    <property type="match status" value="1"/>
</dbReference>
<reference key="1">
    <citation type="submission" date="2009-06" db="EMBL/GenBank/DDBJ databases">
        <title>Complete sequence of Thermotogales bacterium TBF 19.5.1.</title>
        <authorList>
            <consortium name="US DOE Joint Genome Institute"/>
            <person name="Lucas S."/>
            <person name="Copeland A."/>
            <person name="Lapidus A."/>
            <person name="Glavina del Rio T."/>
            <person name="Tice H."/>
            <person name="Bruce D."/>
            <person name="Goodwin L."/>
            <person name="Pitluck S."/>
            <person name="Chertkov O."/>
            <person name="Brettin T."/>
            <person name="Detter J.C."/>
            <person name="Han C."/>
            <person name="Schmutz J."/>
            <person name="Larimer F."/>
            <person name="Land M."/>
            <person name="Hauser L."/>
            <person name="Kyrpides N."/>
            <person name="Ovchinnikova G."/>
            <person name="Noll K."/>
        </authorList>
    </citation>
    <scope>NUCLEOTIDE SEQUENCE [LARGE SCALE GENOMIC DNA]</scope>
    <source>
        <strain>ATCC BAA-1733 / DSM 21960 / TBF 19.5.1</strain>
    </source>
</reference>
<proteinExistence type="inferred from homology"/>
<gene>
    <name evidence="1" type="primary">dnaA</name>
    <name type="ordered locus">Kole_0001</name>
</gene>
<feature type="chain" id="PRO_1000205655" description="Chromosomal replication initiator protein DnaA">
    <location>
        <begin position="1"/>
        <end position="447"/>
    </location>
</feature>
<feature type="region of interest" description="Domain I, interacts with DnaA modulators" evidence="1">
    <location>
        <begin position="1"/>
        <end position="66"/>
    </location>
</feature>
<feature type="region of interest" description="Domain II" evidence="1">
    <location>
        <begin position="66"/>
        <end position="102"/>
    </location>
</feature>
<feature type="region of interest" description="Domain III, AAA+ region" evidence="1">
    <location>
        <begin position="103"/>
        <end position="319"/>
    </location>
</feature>
<feature type="region of interest" description="Domain IV, binds dsDNA" evidence="1">
    <location>
        <begin position="320"/>
        <end position="447"/>
    </location>
</feature>
<feature type="binding site" evidence="1">
    <location>
        <position position="146"/>
    </location>
    <ligand>
        <name>ATP</name>
        <dbReference type="ChEBI" id="CHEBI:30616"/>
    </ligand>
</feature>
<feature type="binding site" evidence="1">
    <location>
        <position position="148"/>
    </location>
    <ligand>
        <name>ATP</name>
        <dbReference type="ChEBI" id="CHEBI:30616"/>
    </ligand>
</feature>
<feature type="binding site" evidence="1">
    <location>
        <position position="149"/>
    </location>
    <ligand>
        <name>ATP</name>
        <dbReference type="ChEBI" id="CHEBI:30616"/>
    </ligand>
</feature>
<feature type="binding site" evidence="1">
    <location>
        <position position="150"/>
    </location>
    <ligand>
        <name>ATP</name>
        <dbReference type="ChEBI" id="CHEBI:30616"/>
    </ligand>
</feature>
<keyword id="KW-0067">ATP-binding</keyword>
<keyword id="KW-0963">Cytoplasm</keyword>
<keyword id="KW-0235">DNA replication</keyword>
<keyword id="KW-0238">DNA-binding</keyword>
<keyword id="KW-0446">Lipid-binding</keyword>
<keyword id="KW-0547">Nucleotide-binding</keyword>
<keyword id="KW-1185">Reference proteome</keyword>
<protein>
    <recommendedName>
        <fullName evidence="1">Chromosomal replication initiator protein DnaA</fullName>
    </recommendedName>
</protein>
<sequence length="447" mass="51061">MSNRIISILKKRLARKTWDNWFTTFQVKKVTDDKIIFSVGNLFIKDWLQSKYGSVISKAIKEAYGKNLDYEIVYETTEPEAFNKSNESYKGPLVKKKPLLISNLNANYTFENFVVGPENRVLYEVSLEISRNPGRYNPFFVYGMVGLGKTHLLQAIAHKIMELHPEMRVLYITSEQFMNDMIDSIKYGSVRDFREHYRKKADVLLIDDIQFLIGKNGVQKELFHTFNELYDAGKQIVICSDRNPEELNGFHDRLVSRFQMGMVMEICPPEKDTRFKIAKKFAERESVSLPDDVAQLLADSVDGNLRILRGVIIKLIVQSSINKERIGAALTNQILAAFNKTTVSIKRMKEEDLIMSTIEAVMGVSPEEIKGTSRKQNIVLSRQLLMYILKRHHGKSIKEISKITGKRHSTVIHSIKKIEMSVIKGNTVVKEKLAKILNTMATSSAAG</sequence>
<organism>
    <name type="scientific">Kosmotoga olearia (strain ATCC BAA-1733 / DSM 21960 / TBF 19.5.1)</name>
    <dbReference type="NCBI Taxonomy" id="521045"/>
    <lineage>
        <taxon>Bacteria</taxon>
        <taxon>Thermotogati</taxon>
        <taxon>Thermotogota</taxon>
        <taxon>Thermotogae</taxon>
        <taxon>Kosmotogales</taxon>
        <taxon>Kosmotogaceae</taxon>
        <taxon>Kosmotoga</taxon>
    </lineage>
</organism>
<comment type="function">
    <text evidence="1">Plays an essential role in the initiation and regulation of chromosomal replication. ATP-DnaA binds to the origin of replication (oriC) to initiate formation of the DNA replication initiation complex once per cell cycle. Binds the DnaA box (a 9 base pair repeat at the origin) and separates the double-stranded (ds)DNA. Forms a right-handed helical filament on oriC DNA; dsDNA binds to the exterior of the filament while single-stranded (ss)DNA is stabiized in the filament's interior. The ATP-DnaA-oriC complex binds and stabilizes one strand of the AT-rich DNA unwinding element (DUE), permitting loading of DNA polymerase. After initiation quickly degrades to an ADP-DnaA complex that is not apt for DNA replication. Binds acidic phospholipids.</text>
</comment>
<comment type="subunit">
    <text evidence="1">Oligomerizes as a right-handed, spiral filament on DNA at oriC.</text>
</comment>
<comment type="subcellular location">
    <subcellularLocation>
        <location evidence="1">Cytoplasm</location>
    </subcellularLocation>
</comment>
<comment type="domain">
    <text evidence="1">Domain I is involved in oligomerization and binding regulators, domain II is flexibile and of varying length in different bacteria, domain III forms the AAA+ region, while domain IV binds dsDNA.</text>
</comment>
<comment type="similarity">
    <text evidence="1">Belongs to the DnaA family.</text>
</comment>
<name>DNAA_KOSOT</name>
<accession>C5CH91</accession>